<sequence length="666" mass="74957">MSSPFAPIITADIDWRDDLPYSLQFDDIYYSAEGGINQSLYVFVEGNNLINRWQQLPTNESNVFTIAETGFGTGMNFLLTWKLWEKFAPQNARLHYISCDKHPLKKNDLIKCLQKWPELSVQAEKLIEHYPVLTPGYHHLAFSNNQITLTLMLGDVLECYEQLLFCGDINLEQQLRESYVNAWYLDGFSPSKNQSMWSDNLLTVIAMLSKEGTTVATYSASSIVKTALTNAGFVIEKRKGFGPKRHMLCAYYEKAYSSSKKNRHTPWHINYPVTKDERTALIVGGGLAGCFIANSLAKRGWEVTILEEKEKVGCGGSANQQAVLFPKLSTYKSPFTQFMLYSFLYANDVYKELLKHYDLGELKGSLLLAHNEREKANQQSLIHWLELYPELGQLVDEKQSSELSGISLPCGGLFIPSSGWINSPELCDILIDNKRISLITGNRVQSINYNQKNWVVNDIEASVLILANGQQVNYFHETNHLPVKAIRGQITTIQSTQESTKLKIPLCAEGHVLPALNNSHRVGASYDIGTSEPELNALDDQLNLDRLKRIAPDIMWSQNVLDHWAGIRAASPDYLPIVGPLPNALEFKEVYSELKSNSKRWIAEAAPCYPNLYVCAAFGSRGLTTIPLATEWLAGLINKEISILPRKLIQAISPARFLRKKIIQGP</sequence>
<comment type="function">
    <text evidence="1">Catalyzes the last two steps in the biosynthesis of 5-methylaminomethyl-2-thiouridine (mnm(5)s(2)U) at the wobble position (U34) in tRNA. Catalyzes the FAD-dependent demodification of cmnm(5)s(2)U34 to nm(5)s(2)U34, followed by the transfer of a methyl group from S-adenosyl-L-methionine to nm(5)s(2)U34, to form mnm(5)s(2)U34.</text>
</comment>
<comment type="catalytic activity">
    <reaction evidence="1">
        <text>5-aminomethyl-2-thiouridine(34) in tRNA + S-adenosyl-L-methionine = 5-methylaminomethyl-2-thiouridine(34) in tRNA + S-adenosyl-L-homocysteine + H(+)</text>
        <dbReference type="Rhea" id="RHEA:19569"/>
        <dbReference type="Rhea" id="RHEA-COMP:10195"/>
        <dbReference type="Rhea" id="RHEA-COMP:10197"/>
        <dbReference type="ChEBI" id="CHEBI:15378"/>
        <dbReference type="ChEBI" id="CHEBI:57856"/>
        <dbReference type="ChEBI" id="CHEBI:59789"/>
        <dbReference type="ChEBI" id="CHEBI:74454"/>
        <dbReference type="ChEBI" id="CHEBI:74455"/>
        <dbReference type="EC" id="2.1.1.61"/>
    </reaction>
</comment>
<comment type="cofactor">
    <cofactor evidence="1">
        <name>FAD</name>
        <dbReference type="ChEBI" id="CHEBI:57692"/>
    </cofactor>
</comment>
<comment type="subcellular location">
    <subcellularLocation>
        <location evidence="1">Cytoplasm</location>
    </subcellularLocation>
</comment>
<comment type="similarity">
    <text evidence="1">In the N-terminal section; belongs to the methyltransferase superfamily. tRNA (mnm(5)s(2)U34)-methyltransferase family.</text>
</comment>
<comment type="similarity">
    <text evidence="1">In the C-terminal section; belongs to the DAO family.</text>
</comment>
<proteinExistence type="inferred from homology"/>
<accession>A5IC27</accession>
<gene>
    <name evidence="1" type="primary">mnmC</name>
    <name type="ordered locus">LPC_0953</name>
</gene>
<evidence type="ECO:0000255" key="1">
    <source>
        <dbReference type="HAMAP-Rule" id="MF_01102"/>
    </source>
</evidence>
<dbReference type="EC" id="2.1.1.61" evidence="1"/>
<dbReference type="EC" id="1.5.-.-" evidence="1"/>
<dbReference type="EMBL" id="CP000675">
    <property type="protein sequence ID" value="ABQ54927.1"/>
    <property type="molecule type" value="Genomic_DNA"/>
</dbReference>
<dbReference type="RefSeq" id="WP_011946533.1">
    <property type="nucleotide sequence ID" value="NC_009494.2"/>
</dbReference>
<dbReference type="SMR" id="A5IC27"/>
<dbReference type="KEGG" id="lpc:LPC_0953"/>
<dbReference type="HOGENOM" id="CLU_022427_1_0_6"/>
<dbReference type="GO" id="GO:0005737">
    <property type="term" value="C:cytoplasm"/>
    <property type="evidence" value="ECO:0007669"/>
    <property type="project" value="UniProtKB-SubCell"/>
</dbReference>
<dbReference type="GO" id="GO:0050660">
    <property type="term" value="F:flavin adenine dinucleotide binding"/>
    <property type="evidence" value="ECO:0007669"/>
    <property type="project" value="UniProtKB-UniRule"/>
</dbReference>
<dbReference type="GO" id="GO:0016645">
    <property type="term" value="F:oxidoreductase activity, acting on the CH-NH group of donors"/>
    <property type="evidence" value="ECO:0007669"/>
    <property type="project" value="InterPro"/>
</dbReference>
<dbReference type="GO" id="GO:0004808">
    <property type="term" value="F:tRNA (5-methylaminomethyl-2-thiouridylate)(34)-methyltransferase activity"/>
    <property type="evidence" value="ECO:0007669"/>
    <property type="project" value="UniProtKB-EC"/>
</dbReference>
<dbReference type="GO" id="GO:0032259">
    <property type="term" value="P:methylation"/>
    <property type="evidence" value="ECO:0007669"/>
    <property type="project" value="UniProtKB-KW"/>
</dbReference>
<dbReference type="GO" id="GO:0002097">
    <property type="term" value="P:tRNA wobble base modification"/>
    <property type="evidence" value="ECO:0007669"/>
    <property type="project" value="UniProtKB-UniRule"/>
</dbReference>
<dbReference type="Gene3D" id="3.30.9.10">
    <property type="entry name" value="D-Amino Acid Oxidase, subunit A, domain 2"/>
    <property type="match status" value="1"/>
</dbReference>
<dbReference type="Gene3D" id="3.50.50.60">
    <property type="entry name" value="FAD/NAD(P)-binding domain"/>
    <property type="match status" value="1"/>
</dbReference>
<dbReference type="Gene3D" id="3.40.50.150">
    <property type="entry name" value="Vaccinia Virus protein VP39"/>
    <property type="match status" value="1"/>
</dbReference>
<dbReference type="HAMAP" id="MF_01102">
    <property type="entry name" value="MnmC"/>
    <property type="match status" value="1"/>
</dbReference>
<dbReference type="InterPro" id="IPR006076">
    <property type="entry name" value="FAD-dep_OxRdtase"/>
</dbReference>
<dbReference type="InterPro" id="IPR036188">
    <property type="entry name" value="FAD/NAD-bd_sf"/>
</dbReference>
<dbReference type="InterPro" id="IPR008471">
    <property type="entry name" value="MnmC-like_methylTransf"/>
</dbReference>
<dbReference type="InterPro" id="IPR029063">
    <property type="entry name" value="SAM-dependent_MTases_sf"/>
</dbReference>
<dbReference type="InterPro" id="IPR023032">
    <property type="entry name" value="tRNA_MAMT_biosynth_bifunc_MnmC"/>
</dbReference>
<dbReference type="InterPro" id="IPR047785">
    <property type="entry name" value="tRNA_MNMC2"/>
</dbReference>
<dbReference type="InterPro" id="IPR017610">
    <property type="entry name" value="tRNA_S-uridine_synth_MnmC_C"/>
</dbReference>
<dbReference type="NCBIfam" id="TIGR03197">
    <property type="entry name" value="MnmC_Cterm"/>
    <property type="match status" value="1"/>
</dbReference>
<dbReference type="NCBIfam" id="NF002481">
    <property type="entry name" value="PRK01747.1-2"/>
    <property type="match status" value="1"/>
</dbReference>
<dbReference type="NCBIfam" id="NF033855">
    <property type="entry name" value="tRNA_MNMC2"/>
    <property type="match status" value="1"/>
</dbReference>
<dbReference type="PANTHER" id="PTHR13847">
    <property type="entry name" value="SARCOSINE DEHYDROGENASE-RELATED"/>
    <property type="match status" value="1"/>
</dbReference>
<dbReference type="PANTHER" id="PTHR13847:SF283">
    <property type="entry name" value="TRNA 5-METHYLAMINOMETHYL-2-THIOURIDINE BIOSYNTHESIS BIFUNCTIONAL PROTEIN MNMC"/>
    <property type="match status" value="1"/>
</dbReference>
<dbReference type="Pfam" id="PF01266">
    <property type="entry name" value="DAO"/>
    <property type="match status" value="1"/>
</dbReference>
<dbReference type="Pfam" id="PF05430">
    <property type="entry name" value="Methyltransf_30"/>
    <property type="match status" value="1"/>
</dbReference>
<dbReference type="SUPFAM" id="SSF54373">
    <property type="entry name" value="FAD-linked reductases, C-terminal domain"/>
    <property type="match status" value="1"/>
</dbReference>
<dbReference type="SUPFAM" id="SSF51905">
    <property type="entry name" value="FAD/NAD(P)-binding domain"/>
    <property type="match status" value="1"/>
</dbReference>
<name>MNMC_LEGPC</name>
<reference key="1">
    <citation type="submission" date="2006-11" db="EMBL/GenBank/DDBJ databases">
        <title>Identification and characterization of a new conjugation/ type IVA secretion system (trb/tra) of L. pneumophila Corby localized on a mobile genomic island.</title>
        <authorList>
            <person name="Gloeckner G."/>
            <person name="Albert-Weissenberger C."/>
            <person name="Weinmann E."/>
            <person name="Jacobi S."/>
            <person name="Schunder E."/>
            <person name="Steinert M."/>
            <person name="Buchrieser C."/>
            <person name="Hacker J."/>
            <person name="Heuner K."/>
        </authorList>
    </citation>
    <scope>NUCLEOTIDE SEQUENCE [LARGE SCALE GENOMIC DNA]</scope>
    <source>
        <strain>Corby</strain>
    </source>
</reference>
<keyword id="KW-0963">Cytoplasm</keyword>
<keyword id="KW-0274">FAD</keyword>
<keyword id="KW-0285">Flavoprotein</keyword>
<keyword id="KW-0489">Methyltransferase</keyword>
<keyword id="KW-0511">Multifunctional enzyme</keyword>
<keyword id="KW-0560">Oxidoreductase</keyword>
<keyword id="KW-0949">S-adenosyl-L-methionine</keyword>
<keyword id="KW-0808">Transferase</keyword>
<keyword id="KW-0819">tRNA processing</keyword>
<feature type="chain" id="PRO_0000347990" description="tRNA 5-methylaminomethyl-2-thiouridine biosynthesis bifunctional protein MnmC">
    <location>
        <begin position="1"/>
        <end position="666"/>
    </location>
</feature>
<feature type="region of interest" description="tRNA (mnm(5)s(2)U34)-methyltransferase">
    <location>
        <begin position="1"/>
        <end position="253"/>
    </location>
</feature>
<feature type="region of interest" description="FAD-dependent cmnm(5)s(2)U34 oxidoreductase">
    <location>
        <begin position="283"/>
        <end position="666"/>
    </location>
</feature>
<protein>
    <recommendedName>
        <fullName evidence="1">tRNA 5-methylaminomethyl-2-thiouridine biosynthesis bifunctional protein MnmC</fullName>
        <shortName evidence="1">tRNA mnm(5)s(2)U biosynthesis bifunctional protein</shortName>
    </recommendedName>
    <domain>
        <recommendedName>
            <fullName evidence="1">tRNA (mnm(5)s(2)U34)-methyltransferase</fullName>
            <ecNumber evidence="1">2.1.1.61</ecNumber>
        </recommendedName>
    </domain>
    <domain>
        <recommendedName>
            <fullName evidence="1">FAD-dependent cmnm(5)s(2)U34 oxidoreductase</fullName>
            <ecNumber evidence="1">1.5.-.-</ecNumber>
        </recommendedName>
    </domain>
</protein>
<organism>
    <name type="scientific">Legionella pneumophila (strain Corby)</name>
    <dbReference type="NCBI Taxonomy" id="400673"/>
    <lineage>
        <taxon>Bacteria</taxon>
        <taxon>Pseudomonadati</taxon>
        <taxon>Pseudomonadota</taxon>
        <taxon>Gammaproteobacteria</taxon>
        <taxon>Legionellales</taxon>
        <taxon>Legionellaceae</taxon>
        <taxon>Legionella</taxon>
    </lineage>
</organism>